<accession>Q8RX86</accession>
<accession>B9DGL8</accession>
<accession>Q9FT98</accession>
<sequence length="396" mass="44037">MVLLSFSLRFIAFTLTITLTQIADGFQSRMLMNNGLALSPQMGWNSWNHFQCNINETLIKQTADAMVSSGLSAIGYKYINIDDCWGELKRDSQGSLVAKASTFPSGIKALSDYVHSKGLKLGIYSDAGTLTCSQTMPGSLGHEEQDAKTFASWGIDYLKYDNCENTGTSPRERYPKMSKALLNSGRSIFFSLCEWGQEDPATWAGDIGNSWRTTGDIQDNWKSMTLIADQNDRWASYARPGSWNDPDMLEVGNGGMTKEEYMSHFSIWALAKAPLLIGCDLRSMDKVTFELLSNKEVIAVNQDKLGIQGKKVKKEGDLEVWAGPLSKKRVAVILWNRGSASANITARWAEIGLNSSDIVNARDLWEHSTYSCVKKQLSALVEPHACKMYTLTRRKA</sequence>
<name>AGAL2_ARATH</name>
<proteinExistence type="evidence at protein level"/>
<reference key="1">
    <citation type="journal article" date="2000" name="Nature">
        <title>Sequence and analysis of chromosome 5 of the plant Arabidopsis thaliana.</title>
        <authorList>
            <person name="Tabata S."/>
            <person name="Kaneko T."/>
            <person name="Nakamura Y."/>
            <person name="Kotani H."/>
            <person name="Kato T."/>
            <person name="Asamizu E."/>
            <person name="Miyajima N."/>
            <person name="Sasamoto S."/>
            <person name="Kimura T."/>
            <person name="Hosouchi T."/>
            <person name="Kawashima K."/>
            <person name="Kohara M."/>
            <person name="Matsumoto M."/>
            <person name="Matsuno A."/>
            <person name="Muraki A."/>
            <person name="Nakayama S."/>
            <person name="Nakazaki N."/>
            <person name="Naruo K."/>
            <person name="Okumura S."/>
            <person name="Shinpo S."/>
            <person name="Takeuchi C."/>
            <person name="Wada T."/>
            <person name="Watanabe A."/>
            <person name="Yamada M."/>
            <person name="Yasuda M."/>
            <person name="Sato S."/>
            <person name="de la Bastide M."/>
            <person name="Huang E."/>
            <person name="Spiegel L."/>
            <person name="Gnoj L."/>
            <person name="O'Shaughnessy A."/>
            <person name="Preston R."/>
            <person name="Habermann K."/>
            <person name="Murray J."/>
            <person name="Johnson D."/>
            <person name="Rohlfing T."/>
            <person name="Nelson J."/>
            <person name="Stoneking T."/>
            <person name="Pepin K."/>
            <person name="Spieth J."/>
            <person name="Sekhon M."/>
            <person name="Armstrong J."/>
            <person name="Becker M."/>
            <person name="Belter E."/>
            <person name="Cordum H."/>
            <person name="Cordes M."/>
            <person name="Courtney L."/>
            <person name="Courtney W."/>
            <person name="Dante M."/>
            <person name="Du H."/>
            <person name="Edwards J."/>
            <person name="Fryman J."/>
            <person name="Haakensen B."/>
            <person name="Lamar E."/>
            <person name="Latreille P."/>
            <person name="Leonard S."/>
            <person name="Meyer R."/>
            <person name="Mulvaney E."/>
            <person name="Ozersky P."/>
            <person name="Riley A."/>
            <person name="Strowmatt C."/>
            <person name="Wagner-McPherson C."/>
            <person name="Wollam A."/>
            <person name="Yoakum M."/>
            <person name="Bell M."/>
            <person name="Dedhia N."/>
            <person name="Parnell L."/>
            <person name="Shah R."/>
            <person name="Rodriguez M."/>
            <person name="Hoon See L."/>
            <person name="Vil D."/>
            <person name="Baker J."/>
            <person name="Kirchoff K."/>
            <person name="Toth K."/>
            <person name="King L."/>
            <person name="Bahret A."/>
            <person name="Miller B."/>
            <person name="Marra M.A."/>
            <person name="Martienssen R."/>
            <person name="McCombie W.R."/>
            <person name="Wilson R.K."/>
            <person name="Murphy G."/>
            <person name="Bancroft I."/>
            <person name="Volckaert G."/>
            <person name="Wambutt R."/>
            <person name="Duesterhoeft A."/>
            <person name="Stiekema W."/>
            <person name="Pohl T."/>
            <person name="Entian K.-D."/>
            <person name="Terryn N."/>
            <person name="Hartley N."/>
            <person name="Bent E."/>
            <person name="Johnson S."/>
            <person name="Langham S.-A."/>
            <person name="McCullagh B."/>
            <person name="Robben J."/>
            <person name="Grymonprez B."/>
            <person name="Zimmermann W."/>
            <person name="Ramsperger U."/>
            <person name="Wedler H."/>
            <person name="Balke K."/>
            <person name="Wedler E."/>
            <person name="Peters S."/>
            <person name="van Staveren M."/>
            <person name="Dirkse W."/>
            <person name="Mooijman P."/>
            <person name="Klein Lankhorst R."/>
            <person name="Weitzenegger T."/>
            <person name="Bothe G."/>
            <person name="Rose M."/>
            <person name="Hauf J."/>
            <person name="Berneiser S."/>
            <person name="Hempel S."/>
            <person name="Feldpausch M."/>
            <person name="Lamberth S."/>
            <person name="Villarroel R."/>
            <person name="Gielen J."/>
            <person name="Ardiles W."/>
            <person name="Bents O."/>
            <person name="Lemcke K."/>
            <person name="Kolesov G."/>
            <person name="Mayer K.F.X."/>
            <person name="Rudd S."/>
            <person name="Schoof H."/>
            <person name="Schueller C."/>
            <person name="Zaccaria P."/>
            <person name="Mewes H.-W."/>
            <person name="Bevan M."/>
            <person name="Fransz P.F."/>
        </authorList>
    </citation>
    <scope>NUCLEOTIDE SEQUENCE [LARGE SCALE GENOMIC DNA]</scope>
    <source>
        <strain>cv. Columbia</strain>
    </source>
</reference>
<reference key="2">
    <citation type="journal article" date="2017" name="Plant J.">
        <title>Araport11: a complete reannotation of the Arabidopsis thaliana reference genome.</title>
        <authorList>
            <person name="Cheng C.Y."/>
            <person name="Krishnakumar V."/>
            <person name="Chan A.P."/>
            <person name="Thibaud-Nissen F."/>
            <person name="Schobel S."/>
            <person name="Town C.D."/>
        </authorList>
    </citation>
    <scope>GENOME REANNOTATION</scope>
    <source>
        <strain>cv. Columbia</strain>
    </source>
</reference>
<reference key="3">
    <citation type="journal article" date="2003" name="Science">
        <title>Empirical analysis of transcriptional activity in the Arabidopsis genome.</title>
        <authorList>
            <person name="Yamada K."/>
            <person name="Lim J."/>
            <person name="Dale J.M."/>
            <person name="Chen H."/>
            <person name="Shinn P."/>
            <person name="Palm C.J."/>
            <person name="Southwick A.M."/>
            <person name="Wu H.C."/>
            <person name="Kim C.J."/>
            <person name="Nguyen M."/>
            <person name="Pham P.K."/>
            <person name="Cheuk R.F."/>
            <person name="Karlin-Newmann G."/>
            <person name="Liu S.X."/>
            <person name="Lam B."/>
            <person name="Sakano H."/>
            <person name="Wu T."/>
            <person name="Yu G."/>
            <person name="Miranda M."/>
            <person name="Quach H.L."/>
            <person name="Tripp M."/>
            <person name="Chang C.H."/>
            <person name="Lee J.M."/>
            <person name="Toriumi M.J."/>
            <person name="Chan M.M."/>
            <person name="Tang C.C."/>
            <person name="Onodera C.S."/>
            <person name="Deng J.M."/>
            <person name="Akiyama K."/>
            <person name="Ansari Y."/>
            <person name="Arakawa T."/>
            <person name="Banh J."/>
            <person name="Banno F."/>
            <person name="Bowser L."/>
            <person name="Brooks S.Y."/>
            <person name="Carninci P."/>
            <person name="Chao Q."/>
            <person name="Choy N."/>
            <person name="Enju A."/>
            <person name="Goldsmith A.D."/>
            <person name="Gurjal M."/>
            <person name="Hansen N.F."/>
            <person name="Hayashizaki Y."/>
            <person name="Johnson-Hopson C."/>
            <person name="Hsuan V.W."/>
            <person name="Iida K."/>
            <person name="Karnes M."/>
            <person name="Khan S."/>
            <person name="Koesema E."/>
            <person name="Ishida J."/>
            <person name="Jiang P.X."/>
            <person name="Jones T."/>
            <person name="Kawai J."/>
            <person name="Kamiya A."/>
            <person name="Meyers C."/>
            <person name="Nakajima M."/>
            <person name="Narusaka M."/>
            <person name="Seki M."/>
            <person name="Sakurai T."/>
            <person name="Satou M."/>
            <person name="Tamse R."/>
            <person name="Vaysberg M."/>
            <person name="Wallender E.K."/>
            <person name="Wong C."/>
            <person name="Yamamura Y."/>
            <person name="Yuan S."/>
            <person name="Shinozaki K."/>
            <person name="Davis R.W."/>
            <person name="Theologis A."/>
            <person name="Ecker J.R."/>
        </authorList>
    </citation>
    <scope>NUCLEOTIDE SEQUENCE [LARGE SCALE MRNA] (ISOFORM 1)</scope>
    <source>
        <strain>cv. Columbia</strain>
    </source>
</reference>
<reference key="4">
    <citation type="journal article" date="2009" name="DNA Res.">
        <title>Analysis of multiple occurrences of alternative splicing events in Arabidopsis thaliana using novel sequenced full-length cDNAs.</title>
        <authorList>
            <person name="Iida K."/>
            <person name="Fukami-Kobayashi K."/>
            <person name="Toyoda A."/>
            <person name="Sakaki Y."/>
            <person name="Kobayashi M."/>
            <person name="Seki M."/>
            <person name="Shinozaki K."/>
        </authorList>
    </citation>
    <scope>NUCLEOTIDE SEQUENCE [LARGE SCALE MRNA] (ISOFORM 2)</scope>
    <source>
        <strain>cv. Columbia</strain>
        <tissue evidence="13">Rosette leaf</tissue>
    </source>
</reference>
<reference key="5">
    <citation type="submission" date="2002-03" db="EMBL/GenBank/DDBJ databases">
        <title>Full-length cDNA from Arabidopsis thaliana.</title>
        <authorList>
            <person name="Brover V.V."/>
            <person name="Troukhan M.E."/>
            <person name="Alexandrov N.A."/>
            <person name="Lu Y.-P."/>
            <person name="Flavell R.B."/>
            <person name="Feldmann K.A."/>
        </authorList>
    </citation>
    <scope>NUCLEOTIDE SEQUENCE [LARGE SCALE MRNA] (ISOFORM 1)</scope>
</reference>
<reference key="6">
    <citation type="journal article" date="2004" name="Plant Physiol.">
        <title>Cloning, functional expression, and characterization of the raffinose oligosaccharide chain elongation enzyme, galactan:galactan galactosyltransferase, from common bugle leaves.</title>
        <authorList>
            <person name="Tapernoux-Luthi E.M."/>
            <person name="Bohm A."/>
            <person name="Keller F."/>
        </authorList>
    </citation>
    <scope>GENE FAMILY</scope>
    <scope>NOMENCLATURE</scope>
</reference>
<reference key="7">
    <citation type="journal article" date="2007" name="Planta">
        <title>An alpha-galactosidase with an essential function during leaf development.</title>
        <authorList>
            <person name="Chrost B."/>
            <person name="Kolukisaoglu U."/>
            <person name="Schulz B."/>
            <person name="Krupinska K."/>
        </authorList>
    </citation>
    <scope>FUNCTION</scope>
    <scope>DISRUPTION PHENOTYPE</scope>
    <scope>SUBCELLULAR LOCATION</scope>
</reference>
<reference key="8">
    <citation type="journal article" date="2012" name="PLoS ONE">
        <title>Verticillium longisporum infection affects the leaf apoplastic proteome, metabolome, and cell wall properties in Arabidopsis thaliana.</title>
        <authorList>
            <person name="Floerl S."/>
            <person name="Majcherczyk A."/>
            <person name="Possienke M."/>
            <person name="Feussner K."/>
            <person name="Tappe H."/>
            <person name="Gatz C."/>
            <person name="Feussner I."/>
            <person name="Kues U."/>
            <person name="Polle A."/>
        </authorList>
    </citation>
    <scope>SUBCELLULAR LOCATION</scope>
    <scope>INDUCTION BY VERTICILLIUM LONGISPORUM</scope>
    <scope>IDENTIFICATION BY MASS SPECTROMETRY</scope>
</reference>
<dbReference type="EC" id="3.2.1.22" evidence="4"/>
<dbReference type="EMBL" id="AL392174">
    <property type="protein sequence ID" value="CAC08337.1"/>
    <property type="status" value="ALT_SEQ"/>
    <property type="molecule type" value="Genomic_DNA"/>
</dbReference>
<dbReference type="EMBL" id="CP002688">
    <property type="protein sequence ID" value="AED91290.1"/>
    <property type="molecule type" value="Genomic_DNA"/>
</dbReference>
<dbReference type="EMBL" id="CP002688">
    <property type="protein sequence ID" value="AED91291.1"/>
    <property type="molecule type" value="Genomic_DNA"/>
</dbReference>
<dbReference type="EMBL" id="AY090238">
    <property type="protein sequence ID" value="AAL90902.1"/>
    <property type="molecule type" value="mRNA"/>
</dbReference>
<dbReference type="EMBL" id="BT000619">
    <property type="protein sequence ID" value="AAN18186.1"/>
    <property type="molecule type" value="mRNA"/>
</dbReference>
<dbReference type="EMBL" id="AK317201">
    <property type="protein sequence ID" value="BAH19885.1"/>
    <property type="molecule type" value="mRNA"/>
</dbReference>
<dbReference type="EMBL" id="AY085529">
    <property type="protein sequence ID" value="AAM62753.1"/>
    <property type="molecule type" value="mRNA"/>
</dbReference>
<dbReference type="RefSeq" id="NP_001031855.1">
    <molecule id="Q8RX86-2"/>
    <property type="nucleotide sequence ID" value="NM_001036778.2"/>
</dbReference>
<dbReference type="RefSeq" id="NP_568193.1">
    <molecule id="Q8RX86-1"/>
    <property type="nucleotide sequence ID" value="NM_120921.5"/>
</dbReference>
<dbReference type="SMR" id="Q8RX86"/>
<dbReference type="FunCoup" id="Q8RX86">
    <property type="interactions" value="1575"/>
</dbReference>
<dbReference type="STRING" id="3702.Q8RX86"/>
<dbReference type="CAZy" id="GH27">
    <property type="family name" value="Glycoside Hydrolase Family 27"/>
</dbReference>
<dbReference type="GlyCosmos" id="Q8RX86">
    <property type="glycosylation" value="3 sites, No reported glycans"/>
</dbReference>
<dbReference type="GlyGen" id="Q8RX86">
    <property type="glycosylation" value="3 sites"/>
</dbReference>
<dbReference type="iPTMnet" id="Q8RX86"/>
<dbReference type="PaxDb" id="3702-AT5G08370.1"/>
<dbReference type="ProteomicsDB" id="244733">
    <molecule id="Q8RX86-1"/>
</dbReference>
<dbReference type="EnsemblPlants" id="AT5G08370.1">
    <molecule id="Q8RX86-1"/>
    <property type="protein sequence ID" value="AT5G08370.1"/>
    <property type="gene ID" value="AT5G08370"/>
</dbReference>
<dbReference type="EnsemblPlants" id="AT5G08370.2">
    <molecule id="Q8RX86-2"/>
    <property type="protein sequence ID" value="AT5G08370.2"/>
    <property type="gene ID" value="AT5G08370"/>
</dbReference>
<dbReference type="GeneID" id="830735"/>
<dbReference type="Gramene" id="AT5G08370.1">
    <molecule id="Q8RX86-1"/>
    <property type="protein sequence ID" value="AT5G08370.1"/>
    <property type="gene ID" value="AT5G08370"/>
</dbReference>
<dbReference type="Gramene" id="AT5G08370.2">
    <molecule id="Q8RX86-2"/>
    <property type="protein sequence ID" value="AT5G08370.2"/>
    <property type="gene ID" value="AT5G08370"/>
</dbReference>
<dbReference type="KEGG" id="ath:AT5G08370"/>
<dbReference type="Araport" id="AT5G08370"/>
<dbReference type="TAIR" id="AT5G08370">
    <property type="gene designation" value="AGAL2"/>
</dbReference>
<dbReference type="eggNOG" id="KOG2366">
    <property type="taxonomic scope" value="Eukaryota"/>
</dbReference>
<dbReference type="HOGENOM" id="CLU_013093_2_2_1"/>
<dbReference type="InParanoid" id="Q8RX86"/>
<dbReference type="OMA" id="NIIDWFF"/>
<dbReference type="PhylomeDB" id="Q8RX86"/>
<dbReference type="BioCyc" id="ARA:AT5G08370-MONOMER"/>
<dbReference type="PRO" id="PR:Q8RX86"/>
<dbReference type="Proteomes" id="UP000006548">
    <property type="component" value="Chromosome 5"/>
</dbReference>
<dbReference type="ExpressionAtlas" id="Q8RX86">
    <property type="expression patterns" value="baseline and differential"/>
</dbReference>
<dbReference type="GO" id="GO:0048046">
    <property type="term" value="C:apoplast"/>
    <property type="evidence" value="ECO:0000314"/>
    <property type="project" value="UniProtKB"/>
</dbReference>
<dbReference type="GO" id="GO:0009505">
    <property type="term" value="C:plant-type cell wall"/>
    <property type="evidence" value="ECO:0000314"/>
    <property type="project" value="TAIR"/>
</dbReference>
<dbReference type="GO" id="GO:0099503">
    <property type="term" value="C:secretory vesicle"/>
    <property type="evidence" value="ECO:0007005"/>
    <property type="project" value="TAIR"/>
</dbReference>
<dbReference type="GO" id="GO:0004557">
    <property type="term" value="F:alpha-galactosidase activity"/>
    <property type="evidence" value="ECO:0000314"/>
    <property type="project" value="TAIR"/>
</dbReference>
<dbReference type="GO" id="GO:0005975">
    <property type="term" value="P:carbohydrate metabolic process"/>
    <property type="evidence" value="ECO:0007669"/>
    <property type="project" value="InterPro"/>
</dbReference>
<dbReference type="GO" id="GO:0071555">
    <property type="term" value="P:cell wall organization"/>
    <property type="evidence" value="ECO:0007669"/>
    <property type="project" value="UniProtKB-KW"/>
</dbReference>
<dbReference type="GO" id="GO:0009965">
    <property type="term" value="P:leaf morphogenesis"/>
    <property type="evidence" value="ECO:0000315"/>
    <property type="project" value="TAIR"/>
</dbReference>
<dbReference type="GO" id="GO:0009911">
    <property type="term" value="P:positive regulation of flower development"/>
    <property type="evidence" value="ECO:0000315"/>
    <property type="project" value="TAIR"/>
</dbReference>
<dbReference type="GO" id="GO:0009620">
    <property type="term" value="P:response to fungus"/>
    <property type="evidence" value="ECO:0000314"/>
    <property type="project" value="UniProtKB"/>
</dbReference>
<dbReference type="CDD" id="cd14792">
    <property type="entry name" value="GH27"/>
    <property type="match status" value="1"/>
</dbReference>
<dbReference type="FunFam" id="2.60.40.1180:FF:000008">
    <property type="entry name" value="Alpha-galactosidase"/>
    <property type="match status" value="1"/>
</dbReference>
<dbReference type="FunFam" id="3.20.20.70:FF:000093">
    <property type="entry name" value="Alpha-galactosidase"/>
    <property type="match status" value="1"/>
</dbReference>
<dbReference type="Gene3D" id="3.20.20.70">
    <property type="entry name" value="Aldolase class I"/>
    <property type="match status" value="1"/>
</dbReference>
<dbReference type="Gene3D" id="2.60.40.1180">
    <property type="entry name" value="Golgi alpha-mannosidase II"/>
    <property type="match status" value="1"/>
</dbReference>
<dbReference type="InterPro" id="IPR013785">
    <property type="entry name" value="Aldolase_TIM"/>
</dbReference>
<dbReference type="InterPro" id="IPR002241">
    <property type="entry name" value="Glyco_hydro_27"/>
</dbReference>
<dbReference type="InterPro" id="IPR000111">
    <property type="entry name" value="Glyco_hydro_27/36_CS"/>
</dbReference>
<dbReference type="InterPro" id="IPR013780">
    <property type="entry name" value="Glyco_hydro_b"/>
</dbReference>
<dbReference type="InterPro" id="IPR017853">
    <property type="entry name" value="Glycoside_hydrolase_SF"/>
</dbReference>
<dbReference type="InterPro" id="IPR041233">
    <property type="entry name" value="Melibiase_C"/>
</dbReference>
<dbReference type="PANTHER" id="PTHR11452:SF33">
    <property type="entry name" value="ALPHA-GALACTOSIDASE 2"/>
    <property type="match status" value="1"/>
</dbReference>
<dbReference type="PANTHER" id="PTHR11452">
    <property type="entry name" value="ALPHA-GALACTOSIDASE/ALPHA-N-ACETYLGALACTOSAMINIDASE"/>
    <property type="match status" value="1"/>
</dbReference>
<dbReference type="Pfam" id="PF16499">
    <property type="entry name" value="Melibiase_2"/>
    <property type="match status" value="1"/>
</dbReference>
<dbReference type="Pfam" id="PF17801">
    <property type="entry name" value="Melibiase_C"/>
    <property type="match status" value="1"/>
</dbReference>
<dbReference type="PRINTS" id="PR00740">
    <property type="entry name" value="GLHYDRLASE27"/>
</dbReference>
<dbReference type="SUPFAM" id="SSF51445">
    <property type="entry name" value="(Trans)glycosidases"/>
    <property type="match status" value="1"/>
</dbReference>
<dbReference type="SUPFAM" id="SSF51011">
    <property type="entry name" value="Glycosyl hydrolase domain"/>
    <property type="match status" value="1"/>
</dbReference>
<dbReference type="PROSITE" id="PS00512">
    <property type="entry name" value="ALPHA_GALACTOSIDASE"/>
    <property type="match status" value="1"/>
</dbReference>
<comment type="function">
    <text evidence="7">May regulate leaf (and possibly other organ) development by functioning in cell wall loosening and cell wall expansion.</text>
</comment>
<comment type="catalytic activity">
    <reaction evidence="4">
        <text>Hydrolysis of terminal, non-reducing alpha-D-galactose residues in alpha-D-galactosides, including galactose oligosaccharides, galactomannans and galactolipids.</text>
        <dbReference type="EC" id="3.2.1.22"/>
    </reaction>
</comment>
<comment type="subunit">
    <text evidence="2">Homodimer.</text>
</comment>
<comment type="subcellular location">
    <subcellularLocation>
        <location evidence="7">Secreted</location>
        <location evidence="7">Cell wall</location>
    </subcellularLocation>
    <subcellularLocation>
        <location evidence="8">Secreted</location>
        <location evidence="8">Extracellular space</location>
        <location evidence="8">Apoplast</location>
    </subcellularLocation>
</comment>
<comment type="alternative products">
    <event type="alternative splicing"/>
    <isoform>
        <id>Q8RX86-1</id>
        <name>1</name>
        <sequence type="displayed"/>
    </isoform>
    <isoform>
        <id>Q8RX86-2</id>
        <name>2</name>
        <sequence type="described" ref="VSP_057449"/>
    </isoform>
</comment>
<comment type="induction">
    <text evidence="8">By Verticillium longisporum (VL43), in apoplasm.</text>
</comment>
<comment type="disruption phenotype">
    <text evidence="7">Increased rosette leaves number with a curly surface leaf morphology and delayed flowering.</text>
</comment>
<comment type="similarity">
    <text evidence="10">Belongs to the glycosyl hydrolase 27 family.</text>
</comment>
<comment type="sequence caution" evidence="10">
    <conflict type="erroneous gene model prediction">
        <sequence resource="EMBL-CDS" id="CAC08337"/>
    </conflict>
</comment>
<organism evidence="12">
    <name type="scientific">Arabidopsis thaliana</name>
    <name type="common">Mouse-ear cress</name>
    <dbReference type="NCBI Taxonomy" id="3702"/>
    <lineage>
        <taxon>Eukaryota</taxon>
        <taxon>Viridiplantae</taxon>
        <taxon>Streptophyta</taxon>
        <taxon>Embryophyta</taxon>
        <taxon>Tracheophyta</taxon>
        <taxon>Spermatophyta</taxon>
        <taxon>Magnoliopsida</taxon>
        <taxon>eudicotyledons</taxon>
        <taxon>Gunneridae</taxon>
        <taxon>Pentapetalae</taxon>
        <taxon>rosids</taxon>
        <taxon>malvids</taxon>
        <taxon>Brassicales</taxon>
        <taxon>Brassicaceae</taxon>
        <taxon>Camelineae</taxon>
        <taxon>Arabidopsis</taxon>
    </lineage>
</organism>
<keyword id="KW-0025">Alternative splicing</keyword>
<keyword id="KW-0052">Apoplast</keyword>
<keyword id="KW-0134">Cell wall</keyword>
<keyword id="KW-0961">Cell wall biogenesis/degradation</keyword>
<keyword id="KW-1015">Disulfide bond</keyword>
<keyword id="KW-0325">Glycoprotein</keyword>
<keyword id="KW-0326">Glycosidase</keyword>
<keyword id="KW-0378">Hydrolase</keyword>
<keyword id="KW-1185">Reference proteome</keyword>
<keyword id="KW-0964">Secreted</keyword>
<keyword id="KW-0732">Signal</keyword>
<feature type="signal peptide" evidence="5">
    <location>
        <begin position="1"/>
        <end position="25"/>
    </location>
</feature>
<feature type="chain" id="PRO_0000431846" description="Alpha-galactosidase 2" evidence="5">
    <location>
        <begin position="26"/>
        <end position="396"/>
    </location>
</feature>
<feature type="active site" description="Nucleophile" evidence="3">
    <location>
        <position position="161"/>
    </location>
</feature>
<feature type="active site" description="Proton donor" evidence="3">
    <location>
        <position position="216"/>
    </location>
</feature>
<feature type="binding site" evidence="3">
    <location>
        <begin position="82"/>
        <end position="83"/>
    </location>
    <ligand>
        <name>substrate</name>
    </ligand>
</feature>
<feature type="binding site" evidence="3">
    <location>
        <position position="159"/>
    </location>
    <ligand>
        <name>substrate</name>
    </ligand>
</feature>
<feature type="binding site" evidence="1">
    <location>
        <begin position="194"/>
        <end position="198"/>
    </location>
    <ligand>
        <name>substrate</name>
    </ligand>
</feature>
<feature type="binding site" evidence="3">
    <location>
        <position position="212"/>
    </location>
    <ligand>
        <name>substrate</name>
    </ligand>
</feature>
<feature type="binding site" evidence="3">
    <location>
        <position position="216"/>
    </location>
    <ligand>
        <name>substrate</name>
    </ligand>
</feature>
<feature type="glycosylation site" description="N-linked (GlcNAc...) asparagine" evidence="6">
    <location>
        <position position="55"/>
    </location>
</feature>
<feature type="glycosylation site" description="N-linked (GlcNAc...) asparagine" evidence="6">
    <location>
        <position position="343"/>
    </location>
</feature>
<feature type="glycosylation site" description="N-linked (GlcNAc...) asparagine" evidence="6">
    <location>
        <position position="354"/>
    </location>
</feature>
<feature type="disulfide bond" evidence="2">
    <location>
        <begin position="52"/>
        <end position="84"/>
    </location>
</feature>
<feature type="disulfide bond" evidence="2">
    <location>
        <begin position="132"/>
        <end position="163"/>
    </location>
</feature>
<feature type="splice variant" id="VSP_057449" description="In isoform 2.">
    <original>MVLLSFSLRFIAFTLTITLTQIADGFQ</original>
    <variation>M</variation>
    <location>
        <begin position="1"/>
        <end position="27"/>
    </location>
</feature>
<evidence type="ECO:0000250" key="1"/>
<evidence type="ECO:0000250" key="2">
    <source>
        <dbReference type="UniProtKB" id="P06280"/>
    </source>
</evidence>
<evidence type="ECO:0000250" key="3">
    <source>
        <dbReference type="UniProtKB" id="P17050"/>
    </source>
</evidence>
<evidence type="ECO:0000250" key="4">
    <source>
        <dbReference type="UniProtKB" id="Q9FXT4"/>
    </source>
</evidence>
<evidence type="ECO:0000255" key="5"/>
<evidence type="ECO:0000255" key="6">
    <source>
        <dbReference type="PROSITE-ProRule" id="PRU00498"/>
    </source>
</evidence>
<evidence type="ECO:0000269" key="7">
    <source>
    </source>
</evidence>
<evidence type="ECO:0000269" key="8">
    <source>
    </source>
</evidence>
<evidence type="ECO:0000303" key="9">
    <source>
    </source>
</evidence>
<evidence type="ECO:0000305" key="10"/>
<evidence type="ECO:0000312" key="11">
    <source>
        <dbReference type="Araport" id="AT5G08370"/>
    </source>
</evidence>
<evidence type="ECO:0000312" key="12">
    <source>
        <dbReference type="EMBL" id="AAL90902.1"/>
    </source>
</evidence>
<evidence type="ECO:0000312" key="13">
    <source>
        <dbReference type="EMBL" id="BAH19885.1"/>
    </source>
</evidence>
<evidence type="ECO:0000312" key="14">
    <source>
        <dbReference type="EMBL" id="CAC08337.1"/>
    </source>
</evidence>
<gene>
    <name evidence="9" type="primary">AGAL2</name>
    <name evidence="11" type="ordered locus">At5g08370</name>
    <name evidence="14" type="ORF">F8L15.100</name>
</gene>
<protein>
    <recommendedName>
        <fullName evidence="9">Alpha-galactosidase 2</fullName>
        <shortName evidence="9">AtAGAL2</shortName>
        <ecNumber evidence="4">3.2.1.22</ecNumber>
    </recommendedName>
    <alternativeName>
        <fullName evidence="10">Alpha-D-galactoside galactohydrolase 2</fullName>
    </alternativeName>
    <alternativeName>
        <fullName evidence="10">Melibiase</fullName>
    </alternativeName>
</protein>